<sequence>MENGIKESPVGLNKNGALAILPTPLVSEGHKNHKSVLNSLTSGALAGAVAKTAVAPLDRTKIIFQVSSNRFSAKEAYRLIYRTYMNDGFLSLWRGNSATMVRVIPYAAIQFCAHEQYKKLLGSYYGFQGSALTPIPRLLAGALAGTTATLLTYPLDLVRARMAVTQKEMYSNIIHVFMRMSREEGLKSLYRGFTPTVLGVIPYAGISFFTYETLKKLHAEHSGRTQPYTFERLLFGACAGLFGQSSSYPLDVVRRRMQTAGVTGHTYGSIIGTMQEIVAEEGFIRGLYKGLSMNWVKGPVAVGISFTTFDLTQILLKKLQQISHIQR</sequence>
<dbReference type="EMBL" id="BC087392">
    <property type="protein sequence ID" value="AAH87392.1"/>
    <property type="molecule type" value="mRNA"/>
</dbReference>
<dbReference type="RefSeq" id="NP_001088738.1">
    <property type="nucleotide sequence ID" value="NM_001095269.1"/>
</dbReference>
<dbReference type="SMR" id="Q5PQ27"/>
<dbReference type="DNASU" id="496002"/>
<dbReference type="GeneID" id="496002"/>
<dbReference type="KEGG" id="xla:496002"/>
<dbReference type="AGR" id="Xenbase:XB-GENE-5933612"/>
<dbReference type="CTD" id="496002"/>
<dbReference type="Xenbase" id="XB-GENE-5933612">
    <property type="gene designation" value="slc25a42.S"/>
</dbReference>
<dbReference type="OrthoDB" id="270584at2759"/>
<dbReference type="Proteomes" id="UP000186698">
    <property type="component" value="Chromosome 1S"/>
</dbReference>
<dbReference type="Bgee" id="496002">
    <property type="expression patterns" value="Expressed in muscle tissue and 13 other cell types or tissues"/>
</dbReference>
<dbReference type="GO" id="GO:0005743">
    <property type="term" value="C:mitochondrial inner membrane"/>
    <property type="evidence" value="ECO:0007669"/>
    <property type="project" value="UniProtKB-SubCell"/>
</dbReference>
<dbReference type="GO" id="GO:0005739">
    <property type="term" value="C:mitochondrion"/>
    <property type="evidence" value="ECO:0000250"/>
    <property type="project" value="UniProtKB"/>
</dbReference>
<dbReference type="GO" id="GO:0043262">
    <property type="term" value="F:ADP phosphatase activity"/>
    <property type="evidence" value="ECO:0000250"/>
    <property type="project" value="UniProtKB"/>
</dbReference>
<dbReference type="GO" id="GO:0015217">
    <property type="term" value="F:ADP transmembrane transporter activity"/>
    <property type="evidence" value="ECO:0000250"/>
    <property type="project" value="UniProtKB"/>
</dbReference>
<dbReference type="GO" id="GO:0080122">
    <property type="term" value="F:AMP transmembrane transporter activity"/>
    <property type="evidence" value="ECO:0000250"/>
    <property type="project" value="UniProtKB"/>
</dbReference>
<dbReference type="GO" id="GO:0005347">
    <property type="term" value="F:ATP transmembrane transporter activity"/>
    <property type="evidence" value="ECO:0000250"/>
    <property type="project" value="UniProtKB"/>
</dbReference>
<dbReference type="GO" id="GO:0015228">
    <property type="term" value="F:coenzyme A transmembrane transporter activity"/>
    <property type="evidence" value="ECO:0000250"/>
    <property type="project" value="UniProtKB"/>
</dbReference>
<dbReference type="GO" id="GO:0015866">
    <property type="term" value="P:ADP transport"/>
    <property type="evidence" value="ECO:0000250"/>
    <property type="project" value="UniProtKB"/>
</dbReference>
<dbReference type="GO" id="GO:0080121">
    <property type="term" value="P:AMP transport"/>
    <property type="evidence" value="ECO:0000250"/>
    <property type="project" value="UniProtKB"/>
</dbReference>
<dbReference type="GO" id="GO:0015867">
    <property type="term" value="P:ATP transport"/>
    <property type="evidence" value="ECO:0000250"/>
    <property type="project" value="UniProtKB"/>
</dbReference>
<dbReference type="GO" id="GO:0035349">
    <property type="term" value="P:coenzyme A transmembrane transport"/>
    <property type="evidence" value="ECO:0000250"/>
    <property type="project" value="UniProtKB"/>
</dbReference>
<dbReference type="FunFam" id="1.50.40.10:FF:000014">
    <property type="entry name" value="mitochondrial coenzyme A transporter SLC25A42"/>
    <property type="match status" value="1"/>
</dbReference>
<dbReference type="Gene3D" id="1.50.40.10">
    <property type="entry name" value="Mitochondrial carrier domain"/>
    <property type="match status" value="1"/>
</dbReference>
<dbReference type="InterPro" id="IPR002167">
    <property type="entry name" value="GDC-like"/>
</dbReference>
<dbReference type="InterPro" id="IPR002067">
    <property type="entry name" value="Mit_carrier"/>
</dbReference>
<dbReference type="InterPro" id="IPR018108">
    <property type="entry name" value="Mitochondrial_sb/sol_carrier"/>
</dbReference>
<dbReference type="InterPro" id="IPR023395">
    <property type="entry name" value="Mt_carrier_dom_sf"/>
</dbReference>
<dbReference type="PANTHER" id="PTHR24089">
    <property type="entry name" value="SOLUTE CARRIER FAMILY 25"/>
    <property type="match status" value="1"/>
</dbReference>
<dbReference type="Pfam" id="PF00153">
    <property type="entry name" value="Mito_carr"/>
    <property type="match status" value="3"/>
</dbReference>
<dbReference type="PRINTS" id="PR00928">
    <property type="entry name" value="GRAVESDC"/>
</dbReference>
<dbReference type="PRINTS" id="PR00926">
    <property type="entry name" value="MITOCARRIER"/>
</dbReference>
<dbReference type="SUPFAM" id="SSF103506">
    <property type="entry name" value="Mitochondrial carrier"/>
    <property type="match status" value="1"/>
</dbReference>
<dbReference type="PROSITE" id="PS50920">
    <property type="entry name" value="SOLCAR"/>
    <property type="match status" value="3"/>
</dbReference>
<organism>
    <name type="scientific">Xenopus laevis</name>
    <name type="common">African clawed frog</name>
    <dbReference type="NCBI Taxonomy" id="8355"/>
    <lineage>
        <taxon>Eukaryota</taxon>
        <taxon>Metazoa</taxon>
        <taxon>Chordata</taxon>
        <taxon>Craniata</taxon>
        <taxon>Vertebrata</taxon>
        <taxon>Euteleostomi</taxon>
        <taxon>Amphibia</taxon>
        <taxon>Batrachia</taxon>
        <taxon>Anura</taxon>
        <taxon>Pipoidea</taxon>
        <taxon>Pipidae</taxon>
        <taxon>Xenopodinae</taxon>
        <taxon>Xenopus</taxon>
        <taxon>Xenopus</taxon>
    </lineage>
</organism>
<comment type="function">
    <text evidence="1">Mitochondrial carrier mediating the transport of coenzyme A (CoA) in mitochondria in exchange for intramitochondrial (deoxy)adenine nucleotides and adenosine 3',5'-diphosphate.</text>
</comment>
<comment type="catalytic activity">
    <reaction evidence="1">
        <text>ADP(out) + CoA(in) = ADP(in) + CoA(out)</text>
        <dbReference type="Rhea" id="RHEA:72839"/>
        <dbReference type="ChEBI" id="CHEBI:57287"/>
        <dbReference type="ChEBI" id="CHEBI:456216"/>
    </reaction>
</comment>
<comment type="catalytic activity">
    <reaction evidence="1">
        <text>3'-dephospho-CoA(in) + ADP(out) = 3'-dephospho-CoA(out) + ADP(in)</text>
        <dbReference type="Rhea" id="RHEA:72843"/>
        <dbReference type="ChEBI" id="CHEBI:57328"/>
        <dbReference type="ChEBI" id="CHEBI:456216"/>
    </reaction>
</comment>
<comment type="catalytic activity">
    <reaction evidence="1">
        <text>adenosine 3',5'-bisphosphate(in) + ADP(out) = adenosine 3',5'-bisphosphate(out) + ADP(in)</text>
        <dbReference type="Rhea" id="RHEA:72847"/>
        <dbReference type="ChEBI" id="CHEBI:58343"/>
        <dbReference type="ChEBI" id="CHEBI:456216"/>
    </reaction>
</comment>
<comment type="catalytic activity">
    <reaction evidence="1">
        <text>AMP(in) + ADP(out) = AMP(out) + ADP(in)</text>
        <dbReference type="Rhea" id="RHEA:72851"/>
        <dbReference type="ChEBI" id="CHEBI:456215"/>
        <dbReference type="ChEBI" id="CHEBI:456216"/>
    </reaction>
</comment>
<comment type="catalytic activity">
    <reaction evidence="1">
        <text>dADP(in) + ADP(out) = dADP(out) + ADP(in)</text>
        <dbReference type="Rhea" id="RHEA:72855"/>
        <dbReference type="ChEBI" id="CHEBI:57667"/>
        <dbReference type="ChEBI" id="CHEBI:456216"/>
    </reaction>
</comment>
<comment type="catalytic activity">
    <reaction evidence="1">
        <text>ADP(in) + ATP(out) = ADP(out) + ATP(in)</text>
        <dbReference type="Rhea" id="RHEA:34999"/>
        <dbReference type="ChEBI" id="CHEBI:30616"/>
        <dbReference type="ChEBI" id="CHEBI:456216"/>
    </reaction>
</comment>
<comment type="subcellular location">
    <subcellularLocation>
        <location evidence="1">Mitochondrion inner membrane</location>
        <topology evidence="2">Multi-pass membrane protein</topology>
    </subcellularLocation>
</comment>
<comment type="similarity">
    <text evidence="3">Belongs to the mitochondrial carrier (TC 2.A.29) family.</text>
</comment>
<proteinExistence type="evidence at transcript level"/>
<evidence type="ECO:0000250" key="1">
    <source>
        <dbReference type="UniProtKB" id="Q86VD7"/>
    </source>
</evidence>
<evidence type="ECO:0000255" key="2"/>
<evidence type="ECO:0000305" key="3"/>
<name>S2542_XENLA</name>
<accession>Q5PQ27</accession>
<feature type="chain" id="PRO_0000291821" description="Mitochondrial coenzyme A transporter SLC25A42">
    <location>
        <begin position="1"/>
        <end position="327"/>
    </location>
</feature>
<feature type="transmembrane region" description="Helical; Name=1" evidence="2">
    <location>
        <begin position="36"/>
        <end position="56"/>
    </location>
</feature>
<feature type="transmembrane region" description="Helical; Name=2" evidence="2">
    <location>
        <begin position="92"/>
        <end position="112"/>
    </location>
</feature>
<feature type="transmembrane region" description="Helical; Name=3" evidence="2">
    <location>
        <begin position="138"/>
        <end position="158"/>
    </location>
</feature>
<feature type="transmembrane region" description="Helical; Name=4" evidence="2">
    <location>
        <begin position="192"/>
        <end position="209"/>
    </location>
</feature>
<feature type="transmembrane region" description="Helical; Name=5" evidence="2">
    <location>
        <begin position="233"/>
        <end position="253"/>
    </location>
</feature>
<feature type="transmembrane region" description="Helical; Name=6" evidence="2">
    <location>
        <begin position="296"/>
        <end position="316"/>
    </location>
</feature>
<feature type="repeat" description="Solcar 1">
    <location>
        <begin position="34"/>
        <end position="120"/>
    </location>
</feature>
<feature type="repeat" description="Solcar 2">
    <location>
        <begin position="132"/>
        <end position="217"/>
    </location>
</feature>
<feature type="repeat" description="Solcar 3">
    <location>
        <begin position="227"/>
        <end position="315"/>
    </location>
</feature>
<protein>
    <recommendedName>
        <fullName>Mitochondrial coenzyme A transporter SLC25A42</fullName>
    </recommendedName>
    <alternativeName>
        <fullName>Solute carrier family 25 member 42</fullName>
    </alternativeName>
</protein>
<keyword id="KW-0472">Membrane</keyword>
<keyword id="KW-0496">Mitochondrion</keyword>
<keyword id="KW-0999">Mitochondrion inner membrane</keyword>
<keyword id="KW-1185">Reference proteome</keyword>
<keyword id="KW-0677">Repeat</keyword>
<keyword id="KW-0812">Transmembrane</keyword>
<keyword id="KW-1133">Transmembrane helix</keyword>
<keyword id="KW-0813">Transport</keyword>
<reference key="1">
    <citation type="submission" date="2004-12" db="EMBL/GenBank/DDBJ databases">
        <authorList>
            <consortium name="NIH - Xenopus Gene Collection (XGC) project"/>
        </authorList>
    </citation>
    <scope>NUCLEOTIDE SEQUENCE [LARGE SCALE MRNA]</scope>
    <source>
        <tissue>Testis</tissue>
    </source>
</reference>
<gene>
    <name type="primary">slc25a42</name>
</gene>